<dbReference type="EC" id="2.4.1.-" evidence="2"/>
<dbReference type="EMBL" id="AK018560">
    <property type="protein sequence ID" value="BAB31275.1"/>
    <property type="molecule type" value="mRNA"/>
</dbReference>
<dbReference type="EMBL" id="AK040397">
    <property type="protein sequence ID" value="BAC30585.1"/>
    <property type="molecule type" value="mRNA"/>
</dbReference>
<dbReference type="EMBL" id="AK043216">
    <property type="protein sequence ID" value="BAC31497.1"/>
    <property type="molecule type" value="mRNA"/>
</dbReference>
<dbReference type="EMBL" id="AK080242">
    <property type="protein sequence ID" value="BAC37857.1"/>
    <property type="molecule type" value="mRNA"/>
</dbReference>
<dbReference type="EMBL" id="AK088117">
    <property type="protein sequence ID" value="BAC40156.1"/>
    <property type="molecule type" value="mRNA"/>
</dbReference>
<dbReference type="EMBL" id="BC005650">
    <property type="protein sequence ID" value="AAH05650.1"/>
    <property type="molecule type" value="mRNA"/>
</dbReference>
<dbReference type="EMBL" id="BC083115">
    <property type="protein sequence ID" value="AAH83115.1"/>
    <property type="molecule type" value="mRNA"/>
</dbReference>
<dbReference type="CCDS" id="CCDS15513.1"/>
<dbReference type="RefSeq" id="NP_080510.1">
    <property type="nucleotide sequence ID" value="NM_026234.4"/>
</dbReference>
<dbReference type="SMR" id="Q8C2R7"/>
<dbReference type="FunCoup" id="Q8C2R7">
    <property type="interactions" value="1431"/>
</dbReference>
<dbReference type="STRING" id="10090.ENSMUSP00000052838"/>
<dbReference type="CAZy" id="GT50">
    <property type="family name" value="Glycosyltransferase Family 50"/>
</dbReference>
<dbReference type="iPTMnet" id="Q8C2R7"/>
<dbReference type="PhosphoSitePlus" id="Q8C2R7"/>
<dbReference type="PaxDb" id="10090-ENSMUSP00000052838"/>
<dbReference type="PeptideAtlas" id="Q8C2R7"/>
<dbReference type="ProteomicsDB" id="288209"/>
<dbReference type="Antibodypedia" id="34265">
    <property type="antibodies" value="79 antibodies from 18 providers"/>
</dbReference>
<dbReference type="DNASU" id="67556"/>
<dbReference type="Ensembl" id="ENSMUST00000052455.4">
    <property type="protein sequence ID" value="ENSMUSP00000052838.3"/>
    <property type="gene ID" value="ENSMUSG00000050229.4"/>
</dbReference>
<dbReference type="GeneID" id="67556"/>
<dbReference type="KEGG" id="mmu:67556"/>
<dbReference type="UCSC" id="uc007dqk.2">
    <property type="organism name" value="mouse"/>
</dbReference>
<dbReference type="AGR" id="MGI:1914806"/>
<dbReference type="CTD" id="93183"/>
<dbReference type="MGI" id="MGI:1914806">
    <property type="gene designation" value="Pigm"/>
</dbReference>
<dbReference type="VEuPathDB" id="HostDB:ENSMUSG00000050229"/>
<dbReference type="eggNOG" id="KOG3893">
    <property type="taxonomic scope" value="Eukaryota"/>
</dbReference>
<dbReference type="GeneTree" id="ENSGT00390000017728"/>
<dbReference type="HOGENOM" id="CLU_024220_3_1_1"/>
<dbReference type="InParanoid" id="Q8C2R7"/>
<dbReference type="OMA" id="MLWFIGQ"/>
<dbReference type="OrthoDB" id="1741594at2759"/>
<dbReference type="PhylomeDB" id="Q8C2R7"/>
<dbReference type="TreeFam" id="TF314752"/>
<dbReference type="Reactome" id="R-MMU-162710">
    <property type="pathway name" value="Synthesis of glycosylphosphatidylinositol (GPI)"/>
</dbReference>
<dbReference type="UniPathway" id="UPA00196"/>
<dbReference type="BioGRID-ORCS" id="67556">
    <property type="hits" value="10 hits in 78 CRISPR screens"/>
</dbReference>
<dbReference type="PRO" id="PR:Q8C2R7"/>
<dbReference type="Proteomes" id="UP000000589">
    <property type="component" value="Chromosome 1"/>
</dbReference>
<dbReference type="RNAct" id="Q8C2R7">
    <property type="molecule type" value="protein"/>
</dbReference>
<dbReference type="Bgee" id="ENSMUSG00000050229">
    <property type="expression patterns" value="Expressed in metanephric cortical collecting duct and 187 other cell types or tissues"/>
</dbReference>
<dbReference type="GO" id="GO:0005789">
    <property type="term" value="C:endoplasmic reticulum membrane"/>
    <property type="evidence" value="ECO:0000250"/>
    <property type="project" value="UniProtKB"/>
</dbReference>
<dbReference type="GO" id="GO:1990529">
    <property type="term" value="C:glycosylphosphatidylinositol-mannosyltransferase I complex"/>
    <property type="evidence" value="ECO:0000250"/>
    <property type="project" value="UniProtKB"/>
</dbReference>
<dbReference type="GO" id="GO:0180041">
    <property type="term" value="F:glycolipid 1,4-alpha-mannosyltransferase activity"/>
    <property type="evidence" value="ECO:0000250"/>
    <property type="project" value="UniProtKB"/>
</dbReference>
<dbReference type="GO" id="GO:0006506">
    <property type="term" value="P:GPI anchor biosynthetic process"/>
    <property type="evidence" value="ECO:0000250"/>
    <property type="project" value="UniProtKB"/>
</dbReference>
<dbReference type="InterPro" id="IPR007704">
    <property type="entry name" value="PIG-M"/>
</dbReference>
<dbReference type="PANTHER" id="PTHR12886:SF0">
    <property type="entry name" value="GPI MANNOSYLTRANSFERASE 1"/>
    <property type="match status" value="1"/>
</dbReference>
<dbReference type="PANTHER" id="PTHR12886">
    <property type="entry name" value="PIG-M MANNOSYLTRANSFERASE"/>
    <property type="match status" value="1"/>
</dbReference>
<dbReference type="Pfam" id="PF05007">
    <property type="entry name" value="Mannosyl_trans"/>
    <property type="match status" value="1"/>
</dbReference>
<feature type="chain" id="PRO_0000246215" description="GPI alpha-1,4-mannosyltransferase I, catalytic subunit">
    <location>
        <begin position="1"/>
        <end position="423"/>
    </location>
</feature>
<feature type="topological domain" description="Cytoplasmic" evidence="2">
    <location>
        <begin position="1"/>
        <end position="17"/>
    </location>
</feature>
<feature type="transmembrane region" description="Helical" evidence="3">
    <location>
        <begin position="18"/>
        <end position="38"/>
    </location>
</feature>
<feature type="topological domain" description="Lumenal" evidence="2">
    <location>
        <begin position="39"/>
        <end position="89"/>
    </location>
</feature>
<feature type="transmembrane region" description="Helical" evidence="3">
    <location>
        <begin position="90"/>
        <end position="110"/>
    </location>
</feature>
<feature type="topological domain" description="Cytoplasmic" evidence="2">
    <location>
        <begin position="111"/>
        <end position="169"/>
    </location>
</feature>
<feature type="transmembrane region" description="Helical" evidence="3">
    <location>
        <begin position="170"/>
        <end position="190"/>
    </location>
</feature>
<feature type="topological domain" description="Lumenal" evidence="2">
    <location>
        <begin position="191"/>
        <end position="224"/>
    </location>
</feature>
<feature type="transmembrane region" description="Helical" evidence="3">
    <location>
        <begin position="225"/>
        <end position="245"/>
    </location>
</feature>
<feature type="topological domain" description="Cytoplasmic" evidence="2">
    <location>
        <begin position="246"/>
        <end position="287"/>
    </location>
</feature>
<feature type="transmembrane region" description="Helical" evidence="3">
    <location>
        <begin position="288"/>
        <end position="308"/>
    </location>
</feature>
<feature type="topological domain" description="Lumenal" evidence="2">
    <location>
        <begin position="309"/>
        <end position="329"/>
    </location>
</feature>
<feature type="transmembrane region" description="Helical" evidence="3">
    <location>
        <begin position="330"/>
        <end position="350"/>
    </location>
</feature>
<feature type="topological domain" description="Cytoplasmic" evidence="2">
    <location>
        <begin position="351"/>
        <end position="357"/>
    </location>
</feature>
<feature type="transmembrane region" description="Helical" evidence="3">
    <location>
        <begin position="358"/>
        <end position="378"/>
    </location>
</feature>
<feature type="topological domain" description="Lumenal" evidence="2">
    <location>
        <begin position="379"/>
        <end position="384"/>
    </location>
</feature>
<feature type="transmembrane region" description="Helical" evidence="3">
    <location>
        <begin position="385"/>
        <end position="405"/>
    </location>
</feature>
<feature type="topological domain" description="Cytoplasmic" evidence="2">
    <location>
        <begin position="406"/>
        <end position="423"/>
    </location>
</feature>
<feature type="sequence conflict" description="In Ref. 1; BAC40156 and 2; AAH05650." evidence="4" ref="1 2">
    <original>Q</original>
    <variation>H</variation>
    <location>
        <position position="206"/>
    </location>
</feature>
<feature type="sequence conflict" description="In Ref. 1; BAC40156." evidence="4" ref="1">
    <original>M</original>
    <variation>I</variation>
    <location>
        <position position="347"/>
    </location>
</feature>
<organism>
    <name type="scientific">Mus musculus</name>
    <name type="common">Mouse</name>
    <dbReference type="NCBI Taxonomy" id="10090"/>
    <lineage>
        <taxon>Eukaryota</taxon>
        <taxon>Metazoa</taxon>
        <taxon>Chordata</taxon>
        <taxon>Craniata</taxon>
        <taxon>Vertebrata</taxon>
        <taxon>Euteleostomi</taxon>
        <taxon>Mammalia</taxon>
        <taxon>Eutheria</taxon>
        <taxon>Euarchontoglires</taxon>
        <taxon>Glires</taxon>
        <taxon>Rodentia</taxon>
        <taxon>Myomorpha</taxon>
        <taxon>Muroidea</taxon>
        <taxon>Muridae</taxon>
        <taxon>Murinae</taxon>
        <taxon>Mus</taxon>
        <taxon>Mus</taxon>
    </lineage>
</organism>
<protein>
    <recommendedName>
        <fullName evidence="4">GPI alpha-1,4-mannosyltransferase I, catalytic subunit</fullName>
        <ecNumber evidence="2">2.4.1.-</ecNumber>
    </recommendedName>
    <alternativeName>
        <fullName>GPI mannosyltransferase I</fullName>
        <shortName>GPI-MT-I</shortName>
    </alternativeName>
    <alternativeName>
        <fullName>Phosphatidylinositol-glycan biosynthesis class M protein</fullName>
        <shortName>PIG-M</shortName>
    </alternativeName>
</protein>
<gene>
    <name evidence="5" type="primary">Pigm</name>
</gene>
<reference key="1">
    <citation type="journal article" date="2005" name="Science">
        <title>The transcriptional landscape of the mammalian genome.</title>
        <authorList>
            <person name="Carninci P."/>
            <person name="Kasukawa T."/>
            <person name="Katayama S."/>
            <person name="Gough J."/>
            <person name="Frith M.C."/>
            <person name="Maeda N."/>
            <person name="Oyama R."/>
            <person name="Ravasi T."/>
            <person name="Lenhard B."/>
            <person name="Wells C."/>
            <person name="Kodzius R."/>
            <person name="Shimokawa K."/>
            <person name="Bajic V.B."/>
            <person name="Brenner S.E."/>
            <person name="Batalov S."/>
            <person name="Forrest A.R."/>
            <person name="Zavolan M."/>
            <person name="Davis M.J."/>
            <person name="Wilming L.G."/>
            <person name="Aidinis V."/>
            <person name="Allen J.E."/>
            <person name="Ambesi-Impiombato A."/>
            <person name="Apweiler R."/>
            <person name="Aturaliya R.N."/>
            <person name="Bailey T.L."/>
            <person name="Bansal M."/>
            <person name="Baxter L."/>
            <person name="Beisel K.W."/>
            <person name="Bersano T."/>
            <person name="Bono H."/>
            <person name="Chalk A.M."/>
            <person name="Chiu K.P."/>
            <person name="Choudhary V."/>
            <person name="Christoffels A."/>
            <person name="Clutterbuck D.R."/>
            <person name="Crowe M.L."/>
            <person name="Dalla E."/>
            <person name="Dalrymple B.P."/>
            <person name="de Bono B."/>
            <person name="Della Gatta G."/>
            <person name="di Bernardo D."/>
            <person name="Down T."/>
            <person name="Engstrom P."/>
            <person name="Fagiolini M."/>
            <person name="Faulkner G."/>
            <person name="Fletcher C.F."/>
            <person name="Fukushima T."/>
            <person name="Furuno M."/>
            <person name="Futaki S."/>
            <person name="Gariboldi M."/>
            <person name="Georgii-Hemming P."/>
            <person name="Gingeras T.R."/>
            <person name="Gojobori T."/>
            <person name="Green R.E."/>
            <person name="Gustincich S."/>
            <person name="Harbers M."/>
            <person name="Hayashi Y."/>
            <person name="Hensch T.K."/>
            <person name="Hirokawa N."/>
            <person name="Hill D."/>
            <person name="Huminiecki L."/>
            <person name="Iacono M."/>
            <person name="Ikeo K."/>
            <person name="Iwama A."/>
            <person name="Ishikawa T."/>
            <person name="Jakt M."/>
            <person name="Kanapin A."/>
            <person name="Katoh M."/>
            <person name="Kawasawa Y."/>
            <person name="Kelso J."/>
            <person name="Kitamura H."/>
            <person name="Kitano H."/>
            <person name="Kollias G."/>
            <person name="Krishnan S.P."/>
            <person name="Kruger A."/>
            <person name="Kummerfeld S.K."/>
            <person name="Kurochkin I.V."/>
            <person name="Lareau L.F."/>
            <person name="Lazarevic D."/>
            <person name="Lipovich L."/>
            <person name="Liu J."/>
            <person name="Liuni S."/>
            <person name="McWilliam S."/>
            <person name="Madan Babu M."/>
            <person name="Madera M."/>
            <person name="Marchionni L."/>
            <person name="Matsuda H."/>
            <person name="Matsuzawa S."/>
            <person name="Miki H."/>
            <person name="Mignone F."/>
            <person name="Miyake S."/>
            <person name="Morris K."/>
            <person name="Mottagui-Tabar S."/>
            <person name="Mulder N."/>
            <person name="Nakano N."/>
            <person name="Nakauchi H."/>
            <person name="Ng P."/>
            <person name="Nilsson R."/>
            <person name="Nishiguchi S."/>
            <person name="Nishikawa S."/>
            <person name="Nori F."/>
            <person name="Ohara O."/>
            <person name="Okazaki Y."/>
            <person name="Orlando V."/>
            <person name="Pang K.C."/>
            <person name="Pavan W.J."/>
            <person name="Pavesi G."/>
            <person name="Pesole G."/>
            <person name="Petrovsky N."/>
            <person name="Piazza S."/>
            <person name="Reed J."/>
            <person name="Reid J.F."/>
            <person name="Ring B.Z."/>
            <person name="Ringwald M."/>
            <person name="Rost B."/>
            <person name="Ruan Y."/>
            <person name="Salzberg S.L."/>
            <person name="Sandelin A."/>
            <person name="Schneider C."/>
            <person name="Schoenbach C."/>
            <person name="Sekiguchi K."/>
            <person name="Semple C.A."/>
            <person name="Seno S."/>
            <person name="Sessa L."/>
            <person name="Sheng Y."/>
            <person name="Shibata Y."/>
            <person name="Shimada H."/>
            <person name="Shimada K."/>
            <person name="Silva D."/>
            <person name="Sinclair B."/>
            <person name="Sperling S."/>
            <person name="Stupka E."/>
            <person name="Sugiura K."/>
            <person name="Sultana R."/>
            <person name="Takenaka Y."/>
            <person name="Taki K."/>
            <person name="Tammoja K."/>
            <person name="Tan S.L."/>
            <person name="Tang S."/>
            <person name="Taylor M.S."/>
            <person name="Tegner J."/>
            <person name="Teichmann S.A."/>
            <person name="Ueda H.R."/>
            <person name="van Nimwegen E."/>
            <person name="Verardo R."/>
            <person name="Wei C.L."/>
            <person name="Yagi K."/>
            <person name="Yamanishi H."/>
            <person name="Zabarovsky E."/>
            <person name="Zhu S."/>
            <person name="Zimmer A."/>
            <person name="Hide W."/>
            <person name="Bult C."/>
            <person name="Grimmond S.M."/>
            <person name="Teasdale R.D."/>
            <person name="Liu E.T."/>
            <person name="Brusic V."/>
            <person name="Quackenbush J."/>
            <person name="Wahlestedt C."/>
            <person name="Mattick J.S."/>
            <person name="Hume D.A."/>
            <person name="Kai C."/>
            <person name="Sasaki D."/>
            <person name="Tomaru Y."/>
            <person name="Fukuda S."/>
            <person name="Kanamori-Katayama M."/>
            <person name="Suzuki M."/>
            <person name="Aoki J."/>
            <person name="Arakawa T."/>
            <person name="Iida J."/>
            <person name="Imamura K."/>
            <person name="Itoh M."/>
            <person name="Kato T."/>
            <person name="Kawaji H."/>
            <person name="Kawagashira N."/>
            <person name="Kawashima T."/>
            <person name="Kojima M."/>
            <person name="Kondo S."/>
            <person name="Konno H."/>
            <person name="Nakano K."/>
            <person name="Ninomiya N."/>
            <person name="Nishio T."/>
            <person name="Okada M."/>
            <person name="Plessy C."/>
            <person name="Shibata K."/>
            <person name="Shiraki T."/>
            <person name="Suzuki S."/>
            <person name="Tagami M."/>
            <person name="Waki K."/>
            <person name="Watahiki A."/>
            <person name="Okamura-Oho Y."/>
            <person name="Suzuki H."/>
            <person name="Kawai J."/>
            <person name="Hayashizaki Y."/>
        </authorList>
    </citation>
    <scope>NUCLEOTIDE SEQUENCE [LARGE SCALE MRNA]</scope>
    <source>
        <strain>C57BL/6J</strain>
        <strain>NOD</strain>
        <tissue>Aorta</tissue>
        <tissue>Cerebellum</tissue>
        <tissue>Colon</tissue>
        <tissue>Thymus</tissue>
        <tissue>Vein</tissue>
    </source>
</reference>
<reference key="2">
    <citation type="journal article" date="2004" name="Genome Res.">
        <title>The status, quality, and expansion of the NIH full-length cDNA project: the Mammalian Gene Collection (MGC).</title>
        <authorList>
            <consortium name="The MGC Project Team"/>
        </authorList>
    </citation>
    <scope>NUCLEOTIDE SEQUENCE [LARGE SCALE MRNA]</scope>
    <source>
        <strain>NMRI</strain>
        <tissue>Eye</tissue>
        <tissue>Mammary tumor</tissue>
    </source>
</reference>
<sequence>MSYPMHWGEWILNFRVPPAGVFGVAFLARVALVFYGVFQDRTLLVRYTDIDYHVFTDAARFVTEGRSPYLRATYRYTPLLSWLLTPNVYLSELFGKFLFISCDLLTAFLLYRLLLLKGLGRRQACGYCVFWLLNPLPMAVSSRGNADSIVASLVLSTLYFIEKRLIACAAVFYGFAVHMKMYPVTYILPIALHLRPERDDDERLRQARFSFQARLYDFLRRLCSWAVLLFVAVAGLTFVALSFGFYYKYGWEFLEHTYFYHLTRRDIRHNFSPYFYMLYLTAESKWSFTLGIAAFLPQFILLSAASFAYYRDLVFCCFLHTSIFVTFNKVCTSQYFLWYLCLLPLVMPLVRMPWKRAVVLLLFWFIGQALWLAPAYVLEFQGKNTFLFIWLAGLFFLLINCSILIQIISHYKEDRLTERIKYD</sequence>
<name>PIGM_MOUSE</name>
<proteinExistence type="evidence at transcript level"/>
<accession>Q8C2R7</accession>
<accession>Q8C917</accession>
<accession>Q99J22</accession>
<accession>Q9D315</accession>
<comment type="function">
    <text evidence="2">Catalytic subunit of the glycosylphosphatidylinositol-mannosyltransferase I complex which catalyzes the transfer of the first mannose, via an alpha-1,4 bond from a dolichol-phosphate-mannose (Dol-P-Man) to the glucosaminyl acyl phosphatidylinositol (GlcN-(acyl)PI) intermediate to generate alpha-D-Man-(1-&gt;4)-alpha-D-GlcN-(1-&gt;6)-(1-radyl,2-acyl-sn-glycero-3-phospho)-2-acyl-inositol and participates in the sixth step of the glycosylphosphatidylinositol-anchor biosynthesis.</text>
</comment>
<comment type="pathway">
    <text evidence="2">Glycolipid biosynthesis; glycosylphosphatidylinositol-anchor biosynthesis.</text>
</comment>
<comment type="subunit">
    <text evidence="1">Part of the glycosylphosphatidylinositol-mannosyltransferase I complex that is composed of PIGM and PIGX. Interacts with PIGX; PIGX stabilizes PIGM.</text>
</comment>
<comment type="subcellular location">
    <subcellularLocation>
        <location evidence="2">Endoplasmic reticulum membrane</location>
        <topology evidence="2">Multi-pass membrane protein</topology>
    </subcellularLocation>
</comment>
<comment type="similarity">
    <text evidence="4">Belongs to the PIGM family.</text>
</comment>
<keyword id="KW-0256">Endoplasmic reticulum</keyword>
<keyword id="KW-0328">Glycosyltransferase</keyword>
<keyword id="KW-0337">GPI-anchor biosynthesis</keyword>
<keyword id="KW-0472">Membrane</keyword>
<keyword id="KW-1185">Reference proteome</keyword>
<keyword id="KW-0808">Transferase</keyword>
<keyword id="KW-0812">Transmembrane</keyword>
<keyword id="KW-1133">Transmembrane helix</keyword>
<evidence type="ECO:0000250" key="1">
    <source>
        <dbReference type="UniProtKB" id="Q9EQY6"/>
    </source>
</evidence>
<evidence type="ECO:0000250" key="2">
    <source>
        <dbReference type="UniProtKB" id="Q9H3S5"/>
    </source>
</evidence>
<evidence type="ECO:0000255" key="3"/>
<evidence type="ECO:0000305" key="4"/>
<evidence type="ECO:0000312" key="5">
    <source>
        <dbReference type="MGI" id="MGI:1914806"/>
    </source>
</evidence>